<accession>Q8UIB7</accession>
<proteinExistence type="inferred from homology"/>
<gene>
    <name evidence="1" type="primary">argB</name>
    <name type="ordered locus">Atu0380</name>
    <name type="ORF">AGR_C_666</name>
</gene>
<reference key="1">
    <citation type="journal article" date="2001" name="Science">
        <title>The genome of the natural genetic engineer Agrobacterium tumefaciens C58.</title>
        <authorList>
            <person name="Wood D.W."/>
            <person name="Setubal J.C."/>
            <person name="Kaul R."/>
            <person name="Monks D.E."/>
            <person name="Kitajima J.P."/>
            <person name="Okura V.K."/>
            <person name="Zhou Y."/>
            <person name="Chen L."/>
            <person name="Wood G.E."/>
            <person name="Almeida N.F. Jr."/>
            <person name="Woo L."/>
            <person name="Chen Y."/>
            <person name="Paulsen I.T."/>
            <person name="Eisen J.A."/>
            <person name="Karp P.D."/>
            <person name="Bovee D. Sr."/>
            <person name="Chapman P."/>
            <person name="Clendenning J."/>
            <person name="Deatherage G."/>
            <person name="Gillet W."/>
            <person name="Grant C."/>
            <person name="Kutyavin T."/>
            <person name="Levy R."/>
            <person name="Li M.-J."/>
            <person name="McClelland E."/>
            <person name="Palmieri A."/>
            <person name="Raymond C."/>
            <person name="Rouse G."/>
            <person name="Saenphimmachak C."/>
            <person name="Wu Z."/>
            <person name="Romero P."/>
            <person name="Gordon D."/>
            <person name="Zhang S."/>
            <person name="Yoo H."/>
            <person name="Tao Y."/>
            <person name="Biddle P."/>
            <person name="Jung M."/>
            <person name="Krespan W."/>
            <person name="Perry M."/>
            <person name="Gordon-Kamm B."/>
            <person name="Liao L."/>
            <person name="Kim S."/>
            <person name="Hendrick C."/>
            <person name="Zhao Z.-Y."/>
            <person name="Dolan M."/>
            <person name="Chumley F."/>
            <person name="Tingey S.V."/>
            <person name="Tomb J.-F."/>
            <person name="Gordon M.P."/>
            <person name="Olson M.V."/>
            <person name="Nester E.W."/>
        </authorList>
    </citation>
    <scope>NUCLEOTIDE SEQUENCE [LARGE SCALE GENOMIC DNA]</scope>
    <source>
        <strain>C58 / ATCC 33970</strain>
    </source>
</reference>
<reference key="2">
    <citation type="journal article" date="2001" name="Science">
        <title>Genome sequence of the plant pathogen and biotechnology agent Agrobacterium tumefaciens C58.</title>
        <authorList>
            <person name="Goodner B."/>
            <person name="Hinkle G."/>
            <person name="Gattung S."/>
            <person name="Miller N."/>
            <person name="Blanchard M."/>
            <person name="Qurollo B."/>
            <person name="Goldman B.S."/>
            <person name="Cao Y."/>
            <person name="Askenazi M."/>
            <person name="Halling C."/>
            <person name="Mullin L."/>
            <person name="Houmiel K."/>
            <person name="Gordon J."/>
            <person name="Vaudin M."/>
            <person name="Iartchouk O."/>
            <person name="Epp A."/>
            <person name="Liu F."/>
            <person name="Wollam C."/>
            <person name="Allinger M."/>
            <person name="Doughty D."/>
            <person name="Scott C."/>
            <person name="Lappas C."/>
            <person name="Markelz B."/>
            <person name="Flanagan C."/>
            <person name="Crowell C."/>
            <person name="Gurson J."/>
            <person name="Lomo C."/>
            <person name="Sear C."/>
            <person name="Strub G."/>
            <person name="Cielo C."/>
            <person name="Slater S."/>
        </authorList>
    </citation>
    <scope>NUCLEOTIDE SEQUENCE [LARGE SCALE GENOMIC DNA]</scope>
    <source>
        <strain>C58 / ATCC 33970</strain>
    </source>
</reference>
<name>ARGB_AGRFC</name>
<sequence length="294" mass="30988">MTSSESEIQARLLAQALPFMQKYENKTIVVKYGGHAMGDSTLGKAFAEDIALLKQSGINPIVVHGGGPQIGAMLSKMGIESKFEGGLRVTDAKTVEIVEMVLAGSINKEIVALINQTGEWAIGLCGKDGNMVFAEKAKKTVIDPDSNIERVLDLGFVGEVVEVDRTLLDLLAKSEMIPVIAPVAPGRDGATYNINADTFAGAIAGALHATRLLFLTDVPGVLDKNKELIKELTVSEARALIKDGTISGGMIPKVETCIDAIKAGVQGVVILNGKTPHSVLLEIFTEGAGTLIVP</sequence>
<keyword id="KW-0028">Amino-acid biosynthesis</keyword>
<keyword id="KW-0055">Arginine biosynthesis</keyword>
<keyword id="KW-0067">ATP-binding</keyword>
<keyword id="KW-0963">Cytoplasm</keyword>
<keyword id="KW-0418">Kinase</keyword>
<keyword id="KW-0547">Nucleotide-binding</keyword>
<keyword id="KW-1185">Reference proteome</keyword>
<keyword id="KW-0808">Transferase</keyword>
<comment type="function">
    <text evidence="1">Catalyzes the ATP-dependent phosphorylation of N-acetyl-L-glutamate.</text>
</comment>
<comment type="catalytic activity">
    <reaction evidence="1">
        <text>N-acetyl-L-glutamate + ATP = N-acetyl-L-glutamyl 5-phosphate + ADP</text>
        <dbReference type="Rhea" id="RHEA:14629"/>
        <dbReference type="ChEBI" id="CHEBI:30616"/>
        <dbReference type="ChEBI" id="CHEBI:44337"/>
        <dbReference type="ChEBI" id="CHEBI:57936"/>
        <dbReference type="ChEBI" id="CHEBI:456216"/>
        <dbReference type="EC" id="2.7.2.8"/>
    </reaction>
</comment>
<comment type="pathway">
    <text evidence="1">Amino-acid biosynthesis; L-arginine biosynthesis; N(2)-acetyl-L-ornithine from L-glutamate: step 2/4.</text>
</comment>
<comment type="subcellular location">
    <subcellularLocation>
        <location evidence="1">Cytoplasm</location>
    </subcellularLocation>
</comment>
<comment type="similarity">
    <text evidence="1">Belongs to the acetylglutamate kinase family. ArgB subfamily.</text>
</comment>
<feature type="chain" id="PRO_0000112573" description="Acetylglutamate kinase">
    <location>
        <begin position="1"/>
        <end position="294"/>
    </location>
</feature>
<feature type="binding site" evidence="1">
    <location>
        <begin position="66"/>
        <end position="67"/>
    </location>
    <ligand>
        <name>substrate</name>
    </ligand>
</feature>
<feature type="binding site" evidence="1">
    <location>
        <position position="88"/>
    </location>
    <ligand>
        <name>substrate</name>
    </ligand>
</feature>
<feature type="binding site" evidence="1">
    <location>
        <position position="193"/>
    </location>
    <ligand>
        <name>substrate</name>
    </ligand>
</feature>
<feature type="site" description="Transition state stabilizer" evidence="1">
    <location>
        <position position="31"/>
    </location>
</feature>
<feature type="site" description="Transition state stabilizer" evidence="1">
    <location>
        <position position="253"/>
    </location>
</feature>
<dbReference type="EC" id="2.7.2.8" evidence="1"/>
<dbReference type="EMBL" id="AE007869">
    <property type="protein sequence ID" value="AAK86197.1"/>
    <property type="molecule type" value="Genomic_DNA"/>
</dbReference>
<dbReference type="PIR" id="AD2623">
    <property type="entry name" value="AD2623"/>
</dbReference>
<dbReference type="PIR" id="D97405">
    <property type="entry name" value="D97405"/>
</dbReference>
<dbReference type="RefSeq" id="NP_353412.1">
    <property type="nucleotide sequence ID" value="NC_003062.2"/>
</dbReference>
<dbReference type="RefSeq" id="WP_006310227.1">
    <property type="nucleotide sequence ID" value="NC_003062.2"/>
</dbReference>
<dbReference type="SMR" id="Q8UIB7"/>
<dbReference type="STRING" id="176299.Atu0380"/>
<dbReference type="EnsemblBacteria" id="AAK86197">
    <property type="protein sequence ID" value="AAK86197"/>
    <property type="gene ID" value="Atu0380"/>
</dbReference>
<dbReference type="GeneID" id="1132418"/>
<dbReference type="KEGG" id="atu:Atu0380"/>
<dbReference type="PATRIC" id="fig|176299.10.peg.373"/>
<dbReference type="eggNOG" id="COG0548">
    <property type="taxonomic scope" value="Bacteria"/>
</dbReference>
<dbReference type="HOGENOM" id="CLU_053680_0_0_5"/>
<dbReference type="OrthoDB" id="9803155at2"/>
<dbReference type="PhylomeDB" id="Q8UIB7"/>
<dbReference type="BioCyc" id="AGRO:ATU0380-MONOMER"/>
<dbReference type="UniPathway" id="UPA00068">
    <property type="reaction ID" value="UER00107"/>
</dbReference>
<dbReference type="Proteomes" id="UP000000813">
    <property type="component" value="Chromosome circular"/>
</dbReference>
<dbReference type="GO" id="GO:0005737">
    <property type="term" value="C:cytoplasm"/>
    <property type="evidence" value="ECO:0007669"/>
    <property type="project" value="UniProtKB-SubCell"/>
</dbReference>
<dbReference type="GO" id="GO:0003991">
    <property type="term" value="F:acetylglutamate kinase activity"/>
    <property type="evidence" value="ECO:0007669"/>
    <property type="project" value="UniProtKB-UniRule"/>
</dbReference>
<dbReference type="GO" id="GO:0005524">
    <property type="term" value="F:ATP binding"/>
    <property type="evidence" value="ECO:0007669"/>
    <property type="project" value="UniProtKB-UniRule"/>
</dbReference>
<dbReference type="GO" id="GO:0042450">
    <property type="term" value="P:arginine biosynthetic process via ornithine"/>
    <property type="evidence" value="ECO:0007669"/>
    <property type="project" value="UniProtKB-UniRule"/>
</dbReference>
<dbReference type="GO" id="GO:0006526">
    <property type="term" value="P:L-arginine biosynthetic process"/>
    <property type="evidence" value="ECO:0007669"/>
    <property type="project" value="UniProtKB-UniPathway"/>
</dbReference>
<dbReference type="CDD" id="cd04250">
    <property type="entry name" value="AAK_NAGK-C"/>
    <property type="match status" value="1"/>
</dbReference>
<dbReference type="FunFam" id="3.40.1160.10:FF:000004">
    <property type="entry name" value="Acetylglutamate kinase"/>
    <property type="match status" value="1"/>
</dbReference>
<dbReference type="Gene3D" id="3.40.1160.10">
    <property type="entry name" value="Acetylglutamate kinase-like"/>
    <property type="match status" value="1"/>
</dbReference>
<dbReference type="HAMAP" id="MF_00082">
    <property type="entry name" value="ArgB"/>
    <property type="match status" value="1"/>
</dbReference>
<dbReference type="InterPro" id="IPR036393">
    <property type="entry name" value="AceGlu_kinase-like_sf"/>
</dbReference>
<dbReference type="InterPro" id="IPR004662">
    <property type="entry name" value="AcgluKinase_fam"/>
</dbReference>
<dbReference type="InterPro" id="IPR037528">
    <property type="entry name" value="ArgB"/>
</dbReference>
<dbReference type="InterPro" id="IPR001048">
    <property type="entry name" value="Asp/Glu/Uridylate_kinase"/>
</dbReference>
<dbReference type="InterPro" id="IPR001057">
    <property type="entry name" value="Glu/AcGlu_kinase"/>
</dbReference>
<dbReference type="InterPro" id="IPR041727">
    <property type="entry name" value="NAGK-C"/>
</dbReference>
<dbReference type="NCBIfam" id="TIGR00761">
    <property type="entry name" value="argB"/>
    <property type="match status" value="1"/>
</dbReference>
<dbReference type="PANTHER" id="PTHR23342">
    <property type="entry name" value="N-ACETYLGLUTAMATE SYNTHASE"/>
    <property type="match status" value="1"/>
</dbReference>
<dbReference type="PANTHER" id="PTHR23342:SF0">
    <property type="entry name" value="N-ACETYLGLUTAMATE SYNTHASE, MITOCHONDRIAL"/>
    <property type="match status" value="1"/>
</dbReference>
<dbReference type="Pfam" id="PF00696">
    <property type="entry name" value="AA_kinase"/>
    <property type="match status" value="1"/>
</dbReference>
<dbReference type="PIRSF" id="PIRSF000728">
    <property type="entry name" value="NAGK"/>
    <property type="match status" value="1"/>
</dbReference>
<dbReference type="PRINTS" id="PR00474">
    <property type="entry name" value="GLU5KINASE"/>
</dbReference>
<dbReference type="SUPFAM" id="SSF53633">
    <property type="entry name" value="Carbamate kinase-like"/>
    <property type="match status" value="1"/>
</dbReference>
<evidence type="ECO:0000255" key="1">
    <source>
        <dbReference type="HAMAP-Rule" id="MF_00082"/>
    </source>
</evidence>
<protein>
    <recommendedName>
        <fullName evidence="1">Acetylglutamate kinase</fullName>
        <ecNumber evidence="1">2.7.2.8</ecNumber>
    </recommendedName>
    <alternativeName>
        <fullName evidence="1">N-acetyl-L-glutamate 5-phosphotransferase</fullName>
    </alternativeName>
    <alternativeName>
        <fullName evidence="1">NAG kinase</fullName>
        <shortName evidence="1">NAGK</shortName>
    </alternativeName>
</protein>
<organism>
    <name type="scientific">Agrobacterium fabrum (strain C58 / ATCC 33970)</name>
    <name type="common">Agrobacterium tumefaciens (strain C58)</name>
    <dbReference type="NCBI Taxonomy" id="176299"/>
    <lineage>
        <taxon>Bacteria</taxon>
        <taxon>Pseudomonadati</taxon>
        <taxon>Pseudomonadota</taxon>
        <taxon>Alphaproteobacteria</taxon>
        <taxon>Hyphomicrobiales</taxon>
        <taxon>Rhizobiaceae</taxon>
        <taxon>Rhizobium/Agrobacterium group</taxon>
        <taxon>Agrobacterium</taxon>
        <taxon>Agrobacterium tumefaciens complex</taxon>
    </lineage>
</organism>